<gene>
    <name evidence="2" type="primary">tuf1</name>
    <name type="ordered locus">Mlg_0444</name>
</gene>
<gene>
    <name evidence="2" type="primary">tuf2</name>
    <name type="ordered locus">Mlg_0456</name>
</gene>
<organism>
    <name type="scientific">Alkalilimnicola ehrlichii (strain ATCC BAA-1101 / DSM 17681 / MLHE-1)</name>
    <dbReference type="NCBI Taxonomy" id="187272"/>
    <lineage>
        <taxon>Bacteria</taxon>
        <taxon>Pseudomonadati</taxon>
        <taxon>Pseudomonadota</taxon>
        <taxon>Gammaproteobacteria</taxon>
        <taxon>Chromatiales</taxon>
        <taxon>Ectothiorhodospiraceae</taxon>
        <taxon>Alkalilimnicola</taxon>
    </lineage>
</organism>
<proteinExistence type="inferred from homology"/>
<name>EFTU_ALKEH</name>
<dbReference type="EC" id="3.6.5.3" evidence="2"/>
<dbReference type="EMBL" id="CP000453">
    <property type="protein sequence ID" value="ABI55798.1"/>
    <property type="molecule type" value="Genomic_DNA"/>
</dbReference>
<dbReference type="EMBL" id="CP000453">
    <property type="protein sequence ID" value="ABI55810.1"/>
    <property type="molecule type" value="Genomic_DNA"/>
</dbReference>
<dbReference type="RefSeq" id="WP_011628194.1">
    <property type="nucleotide sequence ID" value="NC_008340.1"/>
</dbReference>
<dbReference type="SMR" id="Q0ABH7"/>
<dbReference type="KEGG" id="aeh:Mlg_0444"/>
<dbReference type="KEGG" id="aeh:Mlg_0456"/>
<dbReference type="eggNOG" id="COG0050">
    <property type="taxonomic scope" value="Bacteria"/>
</dbReference>
<dbReference type="HOGENOM" id="CLU_007265_0_0_6"/>
<dbReference type="OrthoDB" id="9803139at2"/>
<dbReference type="Proteomes" id="UP000001962">
    <property type="component" value="Chromosome"/>
</dbReference>
<dbReference type="GO" id="GO:0005829">
    <property type="term" value="C:cytosol"/>
    <property type="evidence" value="ECO:0007669"/>
    <property type="project" value="TreeGrafter"/>
</dbReference>
<dbReference type="GO" id="GO:0005525">
    <property type="term" value="F:GTP binding"/>
    <property type="evidence" value="ECO:0007669"/>
    <property type="project" value="UniProtKB-UniRule"/>
</dbReference>
<dbReference type="GO" id="GO:0003924">
    <property type="term" value="F:GTPase activity"/>
    <property type="evidence" value="ECO:0007669"/>
    <property type="project" value="InterPro"/>
</dbReference>
<dbReference type="GO" id="GO:0097216">
    <property type="term" value="F:guanosine tetraphosphate binding"/>
    <property type="evidence" value="ECO:0007669"/>
    <property type="project" value="UniProtKB-ARBA"/>
</dbReference>
<dbReference type="GO" id="GO:0003746">
    <property type="term" value="F:translation elongation factor activity"/>
    <property type="evidence" value="ECO:0007669"/>
    <property type="project" value="UniProtKB-UniRule"/>
</dbReference>
<dbReference type="CDD" id="cd01884">
    <property type="entry name" value="EF_Tu"/>
    <property type="match status" value="1"/>
</dbReference>
<dbReference type="CDD" id="cd03697">
    <property type="entry name" value="EFTU_II"/>
    <property type="match status" value="1"/>
</dbReference>
<dbReference type="CDD" id="cd03707">
    <property type="entry name" value="EFTU_III"/>
    <property type="match status" value="1"/>
</dbReference>
<dbReference type="FunFam" id="2.40.30.10:FF:000001">
    <property type="entry name" value="Elongation factor Tu"/>
    <property type="match status" value="1"/>
</dbReference>
<dbReference type="FunFam" id="3.40.50.300:FF:000003">
    <property type="entry name" value="Elongation factor Tu"/>
    <property type="match status" value="1"/>
</dbReference>
<dbReference type="Gene3D" id="3.40.50.300">
    <property type="entry name" value="P-loop containing nucleotide triphosphate hydrolases"/>
    <property type="match status" value="1"/>
</dbReference>
<dbReference type="Gene3D" id="2.40.30.10">
    <property type="entry name" value="Translation factors"/>
    <property type="match status" value="2"/>
</dbReference>
<dbReference type="HAMAP" id="MF_00118_B">
    <property type="entry name" value="EF_Tu_B"/>
    <property type="match status" value="1"/>
</dbReference>
<dbReference type="InterPro" id="IPR041709">
    <property type="entry name" value="EF-Tu_GTP-bd"/>
</dbReference>
<dbReference type="InterPro" id="IPR050055">
    <property type="entry name" value="EF-Tu_GTPase"/>
</dbReference>
<dbReference type="InterPro" id="IPR004161">
    <property type="entry name" value="EFTu-like_2"/>
</dbReference>
<dbReference type="InterPro" id="IPR033720">
    <property type="entry name" value="EFTU_2"/>
</dbReference>
<dbReference type="InterPro" id="IPR031157">
    <property type="entry name" value="G_TR_CS"/>
</dbReference>
<dbReference type="InterPro" id="IPR027417">
    <property type="entry name" value="P-loop_NTPase"/>
</dbReference>
<dbReference type="InterPro" id="IPR005225">
    <property type="entry name" value="Small_GTP-bd"/>
</dbReference>
<dbReference type="InterPro" id="IPR000795">
    <property type="entry name" value="T_Tr_GTP-bd_dom"/>
</dbReference>
<dbReference type="InterPro" id="IPR009000">
    <property type="entry name" value="Transl_B-barrel_sf"/>
</dbReference>
<dbReference type="InterPro" id="IPR009001">
    <property type="entry name" value="Transl_elong_EF1A/Init_IF2_C"/>
</dbReference>
<dbReference type="InterPro" id="IPR004541">
    <property type="entry name" value="Transl_elong_EFTu/EF1A_bac/org"/>
</dbReference>
<dbReference type="InterPro" id="IPR004160">
    <property type="entry name" value="Transl_elong_EFTu/EF1A_C"/>
</dbReference>
<dbReference type="NCBIfam" id="TIGR00485">
    <property type="entry name" value="EF-Tu"/>
    <property type="match status" value="1"/>
</dbReference>
<dbReference type="NCBIfam" id="NF000766">
    <property type="entry name" value="PRK00049.1"/>
    <property type="match status" value="1"/>
</dbReference>
<dbReference type="NCBIfam" id="NF009372">
    <property type="entry name" value="PRK12735.1"/>
    <property type="match status" value="1"/>
</dbReference>
<dbReference type="NCBIfam" id="NF009373">
    <property type="entry name" value="PRK12736.1"/>
    <property type="match status" value="1"/>
</dbReference>
<dbReference type="NCBIfam" id="TIGR00231">
    <property type="entry name" value="small_GTP"/>
    <property type="match status" value="1"/>
</dbReference>
<dbReference type="PANTHER" id="PTHR43721:SF22">
    <property type="entry name" value="ELONGATION FACTOR TU, MITOCHONDRIAL"/>
    <property type="match status" value="1"/>
</dbReference>
<dbReference type="PANTHER" id="PTHR43721">
    <property type="entry name" value="ELONGATION FACTOR TU-RELATED"/>
    <property type="match status" value="1"/>
</dbReference>
<dbReference type="Pfam" id="PF00009">
    <property type="entry name" value="GTP_EFTU"/>
    <property type="match status" value="1"/>
</dbReference>
<dbReference type="Pfam" id="PF03144">
    <property type="entry name" value="GTP_EFTU_D2"/>
    <property type="match status" value="1"/>
</dbReference>
<dbReference type="Pfam" id="PF03143">
    <property type="entry name" value="GTP_EFTU_D3"/>
    <property type="match status" value="1"/>
</dbReference>
<dbReference type="PRINTS" id="PR00315">
    <property type="entry name" value="ELONGATNFCT"/>
</dbReference>
<dbReference type="SUPFAM" id="SSF50465">
    <property type="entry name" value="EF-Tu/eEF-1alpha/eIF2-gamma C-terminal domain"/>
    <property type="match status" value="1"/>
</dbReference>
<dbReference type="SUPFAM" id="SSF52540">
    <property type="entry name" value="P-loop containing nucleoside triphosphate hydrolases"/>
    <property type="match status" value="1"/>
</dbReference>
<dbReference type="SUPFAM" id="SSF50447">
    <property type="entry name" value="Translation proteins"/>
    <property type="match status" value="1"/>
</dbReference>
<dbReference type="PROSITE" id="PS00301">
    <property type="entry name" value="G_TR_1"/>
    <property type="match status" value="1"/>
</dbReference>
<dbReference type="PROSITE" id="PS51722">
    <property type="entry name" value="G_TR_2"/>
    <property type="match status" value="1"/>
</dbReference>
<feature type="chain" id="PRO_0000337309" description="Elongation factor Tu">
    <location>
        <begin position="1"/>
        <end position="396"/>
    </location>
</feature>
<feature type="domain" description="tr-type G">
    <location>
        <begin position="10"/>
        <end position="206"/>
    </location>
</feature>
<feature type="region of interest" description="G1" evidence="1">
    <location>
        <begin position="19"/>
        <end position="26"/>
    </location>
</feature>
<feature type="region of interest" description="G2" evidence="1">
    <location>
        <begin position="60"/>
        <end position="64"/>
    </location>
</feature>
<feature type="region of interest" description="G3" evidence="1">
    <location>
        <begin position="81"/>
        <end position="84"/>
    </location>
</feature>
<feature type="region of interest" description="G4" evidence="1">
    <location>
        <begin position="136"/>
        <end position="139"/>
    </location>
</feature>
<feature type="region of interest" description="G5" evidence="1">
    <location>
        <begin position="174"/>
        <end position="176"/>
    </location>
</feature>
<feature type="binding site" evidence="2">
    <location>
        <begin position="19"/>
        <end position="26"/>
    </location>
    <ligand>
        <name>GTP</name>
        <dbReference type="ChEBI" id="CHEBI:37565"/>
    </ligand>
</feature>
<feature type="binding site" evidence="2">
    <location>
        <position position="26"/>
    </location>
    <ligand>
        <name>Mg(2+)</name>
        <dbReference type="ChEBI" id="CHEBI:18420"/>
    </ligand>
</feature>
<feature type="binding site" evidence="2">
    <location>
        <begin position="81"/>
        <end position="85"/>
    </location>
    <ligand>
        <name>GTP</name>
        <dbReference type="ChEBI" id="CHEBI:37565"/>
    </ligand>
</feature>
<feature type="binding site" evidence="2">
    <location>
        <begin position="136"/>
        <end position="139"/>
    </location>
    <ligand>
        <name>GTP</name>
        <dbReference type="ChEBI" id="CHEBI:37565"/>
    </ligand>
</feature>
<protein>
    <recommendedName>
        <fullName evidence="2">Elongation factor Tu</fullName>
        <shortName evidence="2">EF-Tu</shortName>
        <ecNumber evidence="2">3.6.5.3</ecNumber>
    </recommendedName>
</protein>
<accession>Q0ABH7</accession>
<reference key="1">
    <citation type="submission" date="2006-08" db="EMBL/GenBank/DDBJ databases">
        <title>Complete sequence of Alkalilimnicola ehrilichei MLHE-1.</title>
        <authorList>
            <person name="Copeland A."/>
            <person name="Lucas S."/>
            <person name="Lapidus A."/>
            <person name="Barry K."/>
            <person name="Detter J.C."/>
            <person name="Glavina del Rio T."/>
            <person name="Hammon N."/>
            <person name="Israni S."/>
            <person name="Dalin E."/>
            <person name="Tice H."/>
            <person name="Pitluck S."/>
            <person name="Sims D."/>
            <person name="Brettin T."/>
            <person name="Bruce D."/>
            <person name="Han C."/>
            <person name="Tapia R."/>
            <person name="Gilna P."/>
            <person name="Schmutz J."/>
            <person name="Larimer F."/>
            <person name="Land M."/>
            <person name="Hauser L."/>
            <person name="Kyrpides N."/>
            <person name="Mikhailova N."/>
            <person name="Oremland R.S."/>
            <person name="Hoeft S.E."/>
            <person name="Switzer-Blum J."/>
            <person name="Kulp T."/>
            <person name="King G."/>
            <person name="Tabita R."/>
            <person name="Witte B."/>
            <person name="Santini J.M."/>
            <person name="Basu P."/>
            <person name="Hollibaugh J.T."/>
            <person name="Xie G."/>
            <person name="Stolz J.F."/>
            <person name="Richardson P."/>
        </authorList>
    </citation>
    <scope>NUCLEOTIDE SEQUENCE [LARGE SCALE GENOMIC DNA]</scope>
    <source>
        <strain>ATCC BAA-1101 / DSM 17681 / MLHE-1</strain>
    </source>
</reference>
<evidence type="ECO:0000250" key="1"/>
<evidence type="ECO:0000255" key="2">
    <source>
        <dbReference type="HAMAP-Rule" id="MF_00118"/>
    </source>
</evidence>
<comment type="function">
    <text evidence="2">GTP hydrolase that promotes the GTP-dependent binding of aminoacyl-tRNA to the A-site of ribosomes during protein biosynthesis.</text>
</comment>
<comment type="catalytic activity">
    <reaction evidence="2">
        <text>GTP + H2O = GDP + phosphate + H(+)</text>
        <dbReference type="Rhea" id="RHEA:19669"/>
        <dbReference type="ChEBI" id="CHEBI:15377"/>
        <dbReference type="ChEBI" id="CHEBI:15378"/>
        <dbReference type="ChEBI" id="CHEBI:37565"/>
        <dbReference type="ChEBI" id="CHEBI:43474"/>
        <dbReference type="ChEBI" id="CHEBI:58189"/>
        <dbReference type="EC" id="3.6.5.3"/>
    </reaction>
    <physiologicalReaction direction="left-to-right" evidence="2">
        <dbReference type="Rhea" id="RHEA:19670"/>
    </physiologicalReaction>
</comment>
<comment type="subunit">
    <text evidence="2">Monomer.</text>
</comment>
<comment type="subcellular location">
    <subcellularLocation>
        <location evidence="2">Cytoplasm</location>
    </subcellularLocation>
</comment>
<comment type="similarity">
    <text evidence="2">Belongs to the TRAFAC class translation factor GTPase superfamily. Classic translation factor GTPase family. EF-Tu/EF-1A subfamily.</text>
</comment>
<keyword id="KW-0963">Cytoplasm</keyword>
<keyword id="KW-0251">Elongation factor</keyword>
<keyword id="KW-0342">GTP-binding</keyword>
<keyword id="KW-0378">Hydrolase</keyword>
<keyword id="KW-0460">Magnesium</keyword>
<keyword id="KW-0479">Metal-binding</keyword>
<keyword id="KW-0547">Nucleotide-binding</keyword>
<keyword id="KW-0648">Protein biosynthesis</keyword>
<keyword id="KW-1185">Reference proteome</keyword>
<sequence>MSKSKFERKKPHVNVGTIGHVDHGKTTLTAAMTVVLAEAFGGDARAFDQIDNAPEEKARGITIATAHVEYETSERHYAHVDCPGHADYVKNMITGAAQMDGAILVVSAADGPMPQTREHILLARQVGVPYIVVYLNKADMVDDEELLELVEMEVRELLSDYDFPGDDTPVITGSALKALEGDDSEIGKPSIIKLAEAMDEYIPTPERPVDQPFLMPIEDVFSISGRGTVVTGRVERGVIKTGEEVEIVGLKETQKTTCTGVEMFRKMLDQGEAGDNIGALLRGTKRDEVERGQVLCKPGSITPHTKFECEVYVLSKDEGGRHTPFFNGYRPQFYFRTTDVTGSCELPEGVEMVMPGDNVKMTVSLIAPIAMEDGLRFAVREGGRTVGAGVVSKIIE</sequence>